<sequence length="193" mass="21202">MAKKQSILSPIIRITFTFLVLCGLVYPLIVTGIAQAVMKDNADGSLIYNDKNEVIGSTLIGQNFTDPRYFHGRVSSIEYKAEASGSNNYAPSNPDLEKRVEKSIEEWKKQNPSVPVTEVPIDLVTNSGSGLDPDISPKAASVQVERISKLTNIPKETLDQLIKDQTEGAALGLFGETRVNVLKLNLELQKIMK</sequence>
<organism>
    <name type="scientific">Bacillus cereus (strain AH820)</name>
    <dbReference type="NCBI Taxonomy" id="405535"/>
    <lineage>
        <taxon>Bacteria</taxon>
        <taxon>Bacillati</taxon>
        <taxon>Bacillota</taxon>
        <taxon>Bacilli</taxon>
        <taxon>Bacillales</taxon>
        <taxon>Bacillaceae</taxon>
        <taxon>Bacillus</taxon>
        <taxon>Bacillus cereus group</taxon>
    </lineage>
</organism>
<accession>B7JRB9</accession>
<gene>
    <name evidence="1" type="primary">kdpC</name>
    <name type="ordered locus">BCAH820_0817</name>
</gene>
<reference key="1">
    <citation type="submission" date="2008-10" db="EMBL/GenBank/DDBJ databases">
        <title>Genome sequence of Bacillus cereus AH820.</title>
        <authorList>
            <person name="Dodson R.J."/>
            <person name="Durkin A.S."/>
            <person name="Rosovitz M.J."/>
            <person name="Rasko D.A."/>
            <person name="Hoffmaster A."/>
            <person name="Ravel J."/>
            <person name="Sutton G."/>
        </authorList>
    </citation>
    <scope>NUCLEOTIDE SEQUENCE [LARGE SCALE GENOMIC DNA]</scope>
    <source>
        <strain>AH820</strain>
    </source>
</reference>
<keyword id="KW-0067">ATP-binding</keyword>
<keyword id="KW-1003">Cell membrane</keyword>
<keyword id="KW-0406">Ion transport</keyword>
<keyword id="KW-0472">Membrane</keyword>
<keyword id="KW-0547">Nucleotide-binding</keyword>
<keyword id="KW-0630">Potassium</keyword>
<keyword id="KW-0633">Potassium transport</keyword>
<keyword id="KW-0812">Transmembrane</keyword>
<keyword id="KW-1133">Transmembrane helix</keyword>
<keyword id="KW-0813">Transport</keyword>
<proteinExistence type="inferred from homology"/>
<evidence type="ECO:0000255" key="1">
    <source>
        <dbReference type="HAMAP-Rule" id="MF_00276"/>
    </source>
</evidence>
<comment type="function">
    <text evidence="1">Part of the high-affinity ATP-driven potassium transport (or Kdp) system, which catalyzes the hydrolysis of ATP coupled with the electrogenic transport of potassium into the cytoplasm. This subunit acts as a catalytic chaperone that increases the ATP-binding affinity of the ATP-hydrolyzing subunit KdpB by the formation of a transient KdpB/KdpC/ATP ternary complex.</text>
</comment>
<comment type="subunit">
    <text evidence="1">The system is composed of three essential subunits: KdpA, KdpB and KdpC.</text>
</comment>
<comment type="subcellular location">
    <subcellularLocation>
        <location evidence="1">Cell membrane</location>
        <topology evidence="1">Single-pass membrane protein</topology>
    </subcellularLocation>
</comment>
<comment type="similarity">
    <text evidence="1">Belongs to the KdpC family.</text>
</comment>
<protein>
    <recommendedName>
        <fullName evidence="1">Potassium-transporting ATPase KdpC subunit</fullName>
    </recommendedName>
    <alternativeName>
        <fullName evidence="1">ATP phosphohydrolase [potassium-transporting] C chain</fullName>
    </alternativeName>
    <alternativeName>
        <fullName evidence="1">Potassium-binding and translocating subunit C</fullName>
    </alternativeName>
    <alternativeName>
        <fullName evidence="1">Potassium-translocating ATPase C chain</fullName>
    </alternativeName>
</protein>
<name>KDPC_BACC0</name>
<dbReference type="EMBL" id="CP001283">
    <property type="protein sequence ID" value="ACK91215.1"/>
    <property type="molecule type" value="Genomic_DNA"/>
</dbReference>
<dbReference type="RefSeq" id="WP_001085567.1">
    <property type="nucleotide sequence ID" value="NC_011773.1"/>
</dbReference>
<dbReference type="SMR" id="B7JRB9"/>
<dbReference type="KEGG" id="bcu:BCAH820_0817"/>
<dbReference type="HOGENOM" id="CLU_077094_1_0_9"/>
<dbReference type="Proteomes" id="UP000001363">
    <property type="component" value="Chromosome"/>
</dbReference>
<dbReference type="GO" id="GO:0005886">
    <property type="term" value="C:plasma membrane"/>
    <property type="evidence" value="ECO:0007669"/>
    <property type="project" value="UniProtKB-SubCell"/>
</dbReference>
<dbReference type="GO" id="GO:0005524">
    <property type="term" value="F:ATP binding"/>
    <property type="evidence" value="ECO:0007669"/>
    <property type="project" value="UniProtKB-UniRule"/>
</dbReference>
<dbReference type="GO" id="GO:0008556">
    <property type="term" value="F:P-type potassium transmembrane transporter activity"/>
    <property type="evidence" value="ECO:0007669"/>
    <property type="project" value="InterPro"/>
</dbReference>
<dbReference type="HAMAP" id="MF_00276">
    <property type="entry name" value="KdpC"/>
    <property type="match status" value="1"/>
</dbReference>
<dbReference type="InterPro" id="IPR003820">
    <property type="entry name" value="KdpC"/>
</dbReference>
<dbReference type="NCBIfam" id="TIGR00681">
    <property type="entry name" value="kdpC"/>
    <property type="match status" value="1"/>
</dbReference>
<dbReference type="NCBIfam" id="NF001454">
    <property type="entry name" value="PRK00315.1"/>
    <property type="match status" value="1"/>
</dbReference>
<dbReference type="NCBIfam" id="NF010601">
    <property type="entry name" value="PRK13997.1"/>
    <property type="match status" value="1"/>
</dbReference>
<dbReference type="PANTHER" id="PTHR30042">
    <property type="entry name" value="POTASSIUM-TRANSPORTING ATPASE C CHAIN"/>
    <property type="match status" value="1"/>
</dbReference>
<dbReference type="PANTHER" id="PTHR30042:SF2">
    <property type="entry name" value="POTASSIUM-TRANSPORTING ATPASE KDPC SUBUNIT"/>
    <property type="match status" value="1"/>
</dbReference>
<dbReference type="Pfam" id="PF02669">
    <property type="entry name" value="KdpC"/>
    <property type="match status" value="1"/>
</dbReference>
<dbReference type="PIRSF" id="PIRSF001296">
    <property type="entry name" value="K_ATPase_KdpC"/>
    <property type="match status" value="1"/>
</dbReference>
<feature type="chain" id="PRO_1000119348" description="Potassium-transporting ATPase KdpC subunit">
    <location>
        <begin position="1"/>
        <end position="193"/>
    </location>
</feature>
<feature type="transmembrane region" description="Helical" evidence="1">
    <location>
        <begin position="14"/>
        <end position="34"/>
    </location>
</feature>